<protein>
    <recommendedName>
        <fullName evidence="1">tRNA pseudouridine synthase A</fullName>
        <ecNumber evidence="1">5.4.99.12</ecNumber>
    </recommendedName>
    <alternativeName>
        <fullName evidence="1">tRNA pseudouridine(38-40) synthase</fullName>
    </alternativeName>
    <alternativeName>
        <fullName evidence="1">tRNA pseudouridylate synthase I</fullName>
    </alternativeName>
    <alternativeName>
        <fullName evidence="1">tRNA-uridine isomerase I</fullName>
    </alternativeName>
</protein>
<proteinExistence type="inferred from homology"/>
<keyword id="KW-0413">Isomerase</keyword>
<keyword id="KW-0819">tRNA processing</keyword>
<organism>
    <name type="scientific">Acinetobacter baumannii (strain SDF)</name>
    <dbReference type="NCBI Taxonomy" id="509170"/>
    <lineage>
        <taxon>Bacteria</taxon>
        <taxon>Pseudomonadati</taxon>
        <taxon>Pseudomonadota</taxon>
        <taxon>Gammaproteobacteria</taxon>
        <taxon>Moraxellales</taxon>
        <taxon>Moraxellaceae</taxon>
        <taxon>Acinetobacter</taxon>
        <taxon>Acinetobacter calcoaceticus/baumannii complex</taxon>
    </lineage>
</organism>
<dbReference type="EC" id="5.4.99.12" evidence="1"/>
<dbReference type="EMBL" id="CU468230">
    <property type="protein sequence ID" value="CAP02373.1"/>
    <property type="molecule type" value="Genomic_DNA"/>
</dbReference>
<dbReference type="SMR" id="B0VLA5"/>
<dbReference type="KEGG" id="abm:ABSDF3090"/>
<dbReference type="HOGENOM" id="CLU_014673_0_2_6"/>
<dbReference type="Proteomes" id="UP000001741">
    <property type="component" value="Chromosome"/>
</dbReference>
<dbReference type="GO" id="GO:0003723">
    <property type="term" value="F:RNA binding"/>
    <property type="evidence" value="ECO:0007669"/>
    <property type="project" value="InterPro"/>
</dbReference>
<dbReference type="GO" id="GO:0160147">
    <property type="term" value="F:tRNA pseudouridine(38-40) synthase activity"/>
    <property type="evidence" value="ECO:0007669"/>
    <property type="project" value="UniProtKB-EC"/>
</dbReference>
<dbReference type="GO" id="GO:0031119">
    <property type="term" value="P:tRNA pseudouridine synthesis"/>
    <property type="evidence" value="ECO:0007669"/>
    <property type="project" value="UniProtKB-UniRule"/>
</dbReference>
<dbReference type="CDD" id="cd02570">
    <property type="entry name" value="PseudoU_synth_EcTruA"/>
    <property type="match status" value="1"/>
</dbReference>
<dbReference type="FunFam" id="3.30.70.580:FF:000001">
    <property type="entry name" value="tRNA pseudouridine synthase A"/>
    <property type="match status" value="1"/>
</dbReference>
<dbReference type="Gene3D" id="3.30.70.660">
    <property type="entry name" value="Pseudouridine synthase I, catalytic domain, C-terminal subdomain"/>
    <property type="match status" value="1"/>
</dbReference>
<dbReference type="Gene3D" id="3.30.70.580">
    <property type="entry name" value="Pseudouridine synthase I, catalytic domain, N-terminal subdomain"/>
    <property type="match status" value="1"/>
</dbReference>
<dbReference type="HAMAP" id="MF_00171">
    <property type="entry name" value="TruA"/>
    <property type="match status" value="1"/>
</dbReference>
<dbReference type="InterPro" id="IPR020103">
    <property type="entry name" value="PsdUridine_synth_cat_dom_sf"/>
</dbReference>
<dbReference type="InterPro" id="IPR001406">
    <property type="entry name" value="PsdUridine_synth_TruA"/>
</dbReference>
<dbReference type="InterPro" id="IPR020097">
    <property type="entry name" value="PsdUridine_synth_TruA_a/b_dom"/>
</dbReference>
<dbReference type="InterPro" id="IPR020095">
    <property type="entry name" value="PsdUridine_synth_TruA_C"/>
</dbReference>
<dbReference type="InterPro" id="IPR020094">
    <property type="entry name" value="TruA/RsuA/RluB/E/F_N"/>
</dbReference>
<dbReference type="NCBIfam" id="TIGR00071">
    <property type="entry name" value="hisT_truA"/>
    <property type="match status" value="1"/>
</dbReference>
<dbReference type="PANTHER" id="PTHR11142">
    <property type="entry name" value="PSEUDOURIDYLATE SYNTHASE"/>
    <property type="match status" value="1"/>
</dbReference>
<dbReference type="PANTHER" id="PTHR11142:SF0">
    <property type="entry name" value="TRNA PSEUDOURIDINE SYNTHASE-LIKE 1"/>
    <property type="match status" value="1"/>
</dbReference>
<dbReference type="Pfam" id="PF01416">
    <property type="entry name" value="PseudoU_synth_1"/>
    <property type="match status" value="2"/>
</dbReference>
<dbReference type="PIRSF" id="PIRSF001430">
    <property type="entry name" value="tRNA_psdUrid_synth"/>
    <property type="match status" value="1"/>
</dbReference>
<dbReference type="SUPFAM" id="SSF55120">
    <property type="entry name" value="Pseudouridine synthase"/>
    <property type="match status" value="1"/>
</dbReference>
<evidence type="ECO:0000255" key="1">
    <source>
        <dbReference type="HAMAP-Rule" id="MF_00171"/>
    </source>
</evidence>
<sequence>MQRYAVGIEFSGIQYRGWQTQQPGVASVQETIERVLSKIADEPITLHGAGRTDAGVHATNMVAHFDTNAIRPERGWIMGANSQLPKDISIQWIKQMDEEFHARFKATARRYRYVVYNAPHRPALLHKQVTHIYQKLDVQKMIKAASKFEGTHNFETFRAAACQSNQPVRHVKHCRLFEHGRYLVLDIQADGFLHHMVRNIMGCLLEIGQGMYEIDHIDTMFAAEDRKAAGITAPPDGLYFIQCYYPEQFDLPQPPLGPHWLNLPE</sequence>
<name>TRUA_ACIBS</name>
<reference key="1">
    <citation type="journal article" date="2008" name="PLoS ONE">
        <title>Comparative analysis of Acinetobacters: three genomes for three lifestyles.</title>
        <authorList>
            <person name="Vallenet D."/>
            <person name="Nordmann P."/>
            <person name="Barbe V."/>
            <person name="Poirel L."/>
            <person name="Mangenot S."/>
            <person name="Bataille E."/>
            <person name="Dossat C."/>
            <person name="Gas S."/>
            <person name="Kreimeyer A."/>
            <person name="Lenoble P."/>
            <person name="Oztas S."/>
            <person name="Poulain J."/>
            <person name="Segurens B."/>
            <person name="Robert C."/>
            <person name="Abergel C."/>
            <person name="Claverie J.-M."/>
            <person name="Raoult D."/>
            <person name="Medigue C."/>
            <person name="Weissenbach J."/>
            <person name="Cruveiller S."/>
        </authorList>
    </citation>
    <scope>NUCLEOTIDE SEQUENCE [LARGE SCALE GENOMIC DNA]</scope>
    <source>
        <strain>SDF</strain>
    </source>
</reference>
<accession>B0VLA5</accession>
<gene>
    <name evidence="1" type="primary">truA</name>
    <name type="ordered locus">ABSDF3090</name>
</gene>
<feature type="chain" id="PRO_1000097710" description="tRNA pseudouridine synthase A">
    <location>
        <begin position="1"/>
        <end position="265"/>
    </location>
</feature>
<feature type="active site" description="Nucleophile" evidence="1">
    <location>
        <position position="53"/>
    </location>
</feature>
<feature type="binding site" evidence="1">
    <location>
        <position position="111"/>
    </location>
    <ligand>
        <name>substrate</name>
    </ligand>
</feature>
<comment type="function">
    <text evidence="1">Formation of pseudouridine at positions 38, 39 and 40 in the anticodon stem and loop of transfer RNAs.</text>
</comment>
<comment type="catalytic activity">
    <reaction evidence="1">
        <text>uridine(38/39/40) in tRNA = pseudouridine(38/39/40) in tRNA</text>
        <dbReference type="Rhea" id="RHEA:22376"/>
        <dbReference type="Rhea" id="RHEA-COMP:10085"/>
        <dbReference type="Rhea" id="RHEA-COMP:10087"/>
        <dbReference type="ChEBI" id="CHEBI:65314"/>
        <dbReference type="ChEBI" id="CHEBI:65315"/>
        <dbReference type="EC" id="5.4.99.12"/>
    </reaction>
</comment>
<comment type="subunit">
    <text evidence="1">Homodimer.</text>
</comment>
<comment type="similarity">
    <text evidence="1">Belongs to the tRNA pseudouridine synthase TruA family.</text>
</comment>